<comment type="function">
    <text evidence="1">Catalyzes the formation of 4-diphosphocytidyl-2-C-methyl-D-erythritol from CTP and 2-C-methyl-D-erythritol 4-phosphate (MEP).</text>
</comment>
<comment type="catalytic activity">
    <reaction evidence="1">
        <text>2-C-methyl-D-erythritol 4-phosphate + CTP + H(+) = 4-CDP-2-C-methyl-D-erythritol + diphosphate</text>
        <dbReference type="Rhea" id="RHEA:13429"/>
        <dbReference type="ChEBI" id="CHEBI:15378"/>
        <dbReference type="ChEBI" id="CHEBI:33019"/>
        <dbReference type="ChEBI" id="CHEBI:37563"/>
        <dbReference type="ChEBI" id="CHEBI:57823"/>
        <dbReference type="ChEBI" id="CHEBI:58262"/>
        <dbReference type="EC" id="2.7.7.60"/>
    </reaction>
</comment>
<comment type="pathway">
    <text evidence="1">Isoprenoid biosynthesis; isopentenyl diphosphate biosynthesis via DXP pathway; isopentenyl diphosphate from 1-deoxy-D-xylulose 5-phosphate: step 2/6.</text>
</comment>
<comment type="similarity">
    <text evidence="1">Belongs to the IspD/TarI cytidylyltransferase family. IspD subfamily.</text>
</comment>
<reference key="1">
    <citation type="journal article" date="2008" name="Science">
        <title>Genome of an endosymbiont coupling N2 fixation to cellulolysis within RT protist cells in termite gut.</title>
        <authorList>
            <person name="Hongoh Y."/>
            <person name="Sharma V.K."/>
            <person name="Prakash T."/>
            <person name="Noda S."/>
            <person name="Toh H."/>
            <person name="Taylor T.D."/>
            <person name="Kudo T."/>
            <person name="Sakaki Y."/>
            <person name="Toyoda A."/>
            <person name="Hattori M."/>
            <person name="Ohkuma M."/>
        </authorList>
    </citation>
    <scope>NUCLEOTIDE SEQUENCE [LARGE SCALE GENOMIC DNA]</scope>
</reference>
<evidence type="ECO:0000255" key="1">
    <source>
        <dbReference type="HAMAP-Rule" id="MF_00108"/>
    </source>
</evidence>
<feature type="chain" id="PRO_1000117437" description="2-C-methyl-D-erythritol 4-phosphate cytidylyltransferase">
    <location>
        <begin position="1"/>
        <end position="222"/>
    </location>
</feature>
<feature type="site" description="Transition state stabilizer" evidence="1">
    <location>
        <position position="16"/>
    </location>
</feature>
<feature type="site" description="Transition state stabilizer" evidence="1">
    <location>
        <position position="23"/>
    </location>
</feature>
<feature type="site" description="Positions MEP for the nucleophilic attack" evidence="1">
    <location>
        <position position="152"/>
    </location>
</feature>
<feature type="site" description="Positions MEP for the nucleophilic attack" evidence="1">
    <location>
        <position position="207"/>
    </location>
</feature>
<dbReference type="EC" id="2.7.7.60" evidence="1"/>
<dbReference type="EMBL" id="AP010656">
    <property type="protein sequence ID" value="BAG83374.1"/>
    <property type="molecule type" value="Genomic_DNA"/>
</dbReference>
<dbReference type="RefSeq" id="WP_012573135.1">
    <property type="nucleotide sequence ID" value="NC_011565.1"/>
</dbReference>
<dbReference type="SMR" id="B6YQA2"/>
<dbReference type="STRING" id="511995.CFPG_111"/>
<dbReference type="KEGG" id="aps:CFPG_111"/>
<dbReference type="eggNOG" id="COG1211">
    <property type="taxonomic scope" value="Bacteria"/>
</dbReference>
<dbReference type="HOGENOM" id="CLU_061281_2_2_10"/>
<dbReference type="OrthoDB" id="9806837at2"/>
<dbReference type="UniPathway" id="UPA00056">
    <property type="reaction ID" value="UER00093"/>
</dbReference>
<dbReference type="Proteomes" id="UP000000723">
    <property type="component" value="Chromosome"/>
</dbReference>
<dbReference type="GO" id="GO:0050518">
    <property type="term" value="F:2-C-methyl-D-erythritol 4-phosphate cytidylyltransferase activity"/>
    <property type="evidence" value="ECO:0007669"/>
    <property type="project" value="UniProtKB-UniRule"/>
</dbReference>
<dbReference type="GO" id="GO:0019288">
    <property type="term" value="P:isopentenyl diphosphate biosynthetic process, methylerythritol 4-phosphate pathway"/>
    <property type="evidence" value="ECO:0007669"/>
    <property type="project" value="UniProtKB-UniRule"/>
</dbReference>
<dbReference type="CDD" id="cd02516">
    <property type="entry name" value="CDP-ME_synthetase"/>
    <property type="match status" value="1"/>
</dbReference>
<dbReference type="FunFam" id="3.90.550.10:FF:000003">
    <property type="entry name" value="2-C-methyl-D-erythritol 4-phosphate cytidylyltransferase"/>
    <property type="match status" value="1"/>
</dbReference>
<dbReference type="Gene3D" id="3.90.550.10">
    <property type="entry name" value="Spore Coat Polysaccharide Biosynthesis Protein SpsA, Chain A"/>
    <property type="match status" value="1"/>
</dbReference>
<dbReference type="HAMAP" id="MF_00108">
    <property type="entry name" value="IspD"/>
    <property type="match status" value="1"/>
</dbReference>
<dbReference type="InterPro" id="IPR001228">
    <property type="entry name" value="IspD"/>
</dbReference>
<dbReference type="InterPro" id="IPR034683">
    <property type="entry name" value="IspD/TarI"/>
</dbReference>
<dbReference type="InterPro" id="IPR050088">
    <property type="entry name" value="IspD/TarI_cytidylyltransf_bact"/>
</dbReference>
<dbReference type="InterPro" id="IPR029044">
    <property type="entry name" value="Nucleotide-diphossugar_trans"/>
</dbReference>
<dbReference type="NCBIfam" id="TIGR00453">
    <property type="entry name" value="ispD"/>
    <property type="match status" value="1"/>
</dbReference>
<dbReference type="NCBIfam" id="NF001186">
    <property type="entry name" value="PRK00155.2-3"/>
    <property type="match status" value="1"/>
</dbReference>
<dbReference type="PANTHER" id="PTHR32125">
    <property type="entry name" value="2-C-METHYL-D-ERYTHRITOL 4-PHOSPHATE CYTIDYLYLTRANSFERASE, CHLOROPLASTIC"/>
    <property type="match status" value="1"/>
</dbReference>
<dbReference type="PANTHER" id="PTHR32125:SF4">
    <property type="entry name" value="2-C-METHYL-D-ERYTHRITOL 4-PHOSPHATE CYTIDYLYLTRANSFERASE, CHLOROPLASTIC"/>
    <property type="match status" value="1"/>
</dbReference>
<dbReference type="Pfam" id="PF01128">
    <property type="entry name" value="IspD"/>
    <property type="match status" value="1"/>
</dbReference>
<dbReference type="SUPFAM" id="SSF53448">
    <property type="entry name" value="Nucleotide-diphospho-sugar transferases"/>
    <property type="match status" value="1"/>
</dbReference>
<proteinExistence type="inferred from homology"/>
<gene>
    <name evidence="1" type="primary">ispD</name>
    <name type="ordered locus">CFPG_111</name>
</gene>
<accession>B6YQA2</accession>
<organism>
    <name type="scientific">Azobacteroides pseudotrichonymphae genomovar. CFP2</name>
    <dbReference type="NCBI Taxonomy" id="511995"/>
    <lineage>
        <taxon>Bacteria</taxon>
        <taxon>Pseudomonadati</taxon>
        <taxon>Bacteroidota</taxon>
        <taxon>Bacteroidia</taxon>
        <taxon>Bacteroidales</taxon>
        <taxon>Candidatus Azobacteroides</taxon>
    </lineage>
</organism>
<name>ISPD_AZOPC</name>
<sequence length="222" mass="25102">MKQKYVIIVAGGNGLRMKATIPKQFLLLKGKPILMHTIEAFYRYDTDIHIILVLSEKQKTYWTSLCQQYNFKIDHHTIEGGITRFYSVKNGLFSVKKNCLVAVHDGVRPLVREKLIDNAFKMAQKALAVYPAIPITDSLREITNRNNRTVNRSEFYLVQTPQVFLSDILINAYEATSSDNFTDDISVVESGKICTPTMIKGSKSNIKITTPIDLSIAEALID</sequence>
<protein>
    <recommendedName>
        <fullName evidence="1">2-C-methyl-D-erythritol 4-phosphate cytidylyltransferase</fullName>
        <ecNumber evidence="1">2.7.7.60</ecNumber>
    </recommendedName>
    <alternativeName>
        <fullName evidence="1">4-diphosphocytidyl-2C-methyl-D-erythritol synthase</fullName>
    </alternativeName>
    <alternativeName>
        <fullName evidence="1">MEP cytidylyltransferase</fullName>
        <shortName evidence="1">MCT</shortName>
    </alternativeName>
</protein>
<keyword id="KW-0414">Isoprene biosynthesis</keyword>
<keyword id="KW-0548">Nucleotidyltransferase</keyword>
<keyword id="KW-1185">Reference proteome</keyword>
<keyword id="KW-0808">Transferase</keyword>